<protein>
    <recommendedName>
        <fullName>UDP-glucosyl transferase 73B2</fullName>
        <ecNumber>2.4.1.-</ecNumber>
    </recommendedName>
    <alternativeName>
        <fullName>Flavonol 7-O-glucosyltransferase</fullName>
        <ecNumber evidence="3">2.4.1.237</ecNumber>
    </alternativeName>
    <alternativeName>
        <fullName>UDP glucose:flavonoid 7-O-glucosyltransferase</fullName>
    </alternativeName>
</protein>
<keyword id="KW-0025">Alternative splicing</keyword>
<keyword id="KW-0284">Flavonoid biosynthesis</keyword>
<keyword id="KW-0328">Glycosyltransferase</keyword>
<keyword id="KW-1185">Reference proteome</keyword>
<keyword id="KW-0808">Transferase</keyword>
<proteinExistence type="evidence at protein level"/>
<accession>Q94C57</accession>
<dbReference type="EC" id="2.4.1.-"/>
<dbReference type="EC" id="2.4.1.237" evidence="3"/>
<dbReference type="EMBL" id="AY339370">
    <property type="protein sequence ID" value="AAR01231.1"/>
    <property type="molecule type" value="mRNA"/>
</dbReference>
<dbReference type="EMBL" id="AL161584">
    <property type="status" value="NOT_ANNOTATED_CDS"/>
    <property type="molecule type" value="Genomic_DNA"/>
</dbReference>
<dbReference type="EMBL" id="CP002687">
    <property type="protein sequence ID" value="AEE86328.1"/>
    <property type="molecule type" value="Genomic_DNA"/>
</dbReference>
<dbReference type="EMBL" id="AY035164">
    <property type="protein sequence ID" value="AAK59668.1"/>
    <property type="molecule type" value="mRNA"/>
</dbReference>
<dbReference type="EMBL" id="AY142692">
    <property type="protein sequence ID" value="AAN13230.1"/>
    <property type="molecule type" value="mRNA"/>
</dbReference>
<dbReference type="RefSeq" id="NP_567954.1">
    <molecule id="Q94C57-1"/>
    <property type="nucleotide sequence ID" value="NM_119575.2"/>
</dbReference>
<dbReference type="SMR" id="Q94C57"/>
<dbReference type="FunCoup" id="Q94C57">
    <property type="interactions" value="158"/>
</dbReference>
<dbReference type="STRING" id="3702.Q94C57"/>
<dbReference type="CAZy" id="GT1">
    <property type="family name" value="Glycosyltransferase Family 1"/>
</dbReference>
<dbReference type="PaxDb" id="3702-AT4G34135.1"/>
<dbReference type="ProteomicsDB" id="228729">
    <molecule id="Q94C57-1"/>
</dbReference>
<dbReference type="EnsemblPlants" id="AT4G34135.1">
    <molecule id="Q94C57-1"/>
    <property type="protein sequence ID" value="AT4G34135.1"/>
    <property type="gene ID" value="AT4G34135"/>
</dbReference>
<dbReference type="GeneID" id="829560"/>
<dbReference type="Gramene" id="AT4G34135.1">
    <molecule id="Q94C57-1"/>
    <property type="protein sequence ID" value="AT4G34135.1"/>
    <property type="gene ID" value="AT4G34135"/>
</dbReference>
<dbReference type="KEGG" id="ath:AT4G34135"/>
<dbReference type="Araport" id="AT4G34135"/>
<dbReference type="TAIR" id="AT4G34135">
    <property type="gene designation" value="UGT73B2"/>
</dbReference>
<dbReference type="eggNOG" id="KOG1192">
    <property type="taxonomic scope" value="Eukaryota"/>
</dbReference>
<dbReference type="HOGENOM" id="CLU_001724_2_2_1"/>
<dbReference type="InParanoid" id="Q94C57"/>
<dbReference type="OMA" id="ENREFHI"/>
<dbReference type="PhylomeDB" id="Q94C57"/>
<dbReference type="UniPathway" id="UPA00154"/>
<dbReference type="PRO" id="PR:Q94C57"/>
<dbReference type="Proteomes" id="UP000006548">
    <property type="component" value="Chromosome 4"/>
</dbReference>
<dbReference type="ExpressionAtlas" id="Q94C57">
    <property type="expression patterns" value="baseline and differential"/>
</dbReference>
<dbReference type="GO" id="GO:0047893">
    <property type="term" value="F:flavonol 3-O-glucosyltransferase activity"/>
    <property type="evidence" value="ECO:0000314"/>
    <property type="project" value="TAIR"/>
</dbReference>
<dbReference type="GO" id="GO:0033836">
    <property type="term" value="F:flavonol 7-O-beta-glucosyltransferase activity"/>
    <property type="evidence" value="ECO:0007669"/>
    <property type="project" value="UniProtKB-EC"/>
</dbReference>
<dbReference type="GO" id="GO:0080044">
    <property type="term" value="F:quercetin 7-O-glucosyltransferase activity"/>
    <property type="evidence" value="ECO:0000314"/>
    <property type="project" value="TAIR"/>
</dbReference>
<dbReference type="GO" id="GO:0035251">
    <property type="term" value="F:UDP-glucosyltransferase activity"/>
    <property type="evidence" value="ECO:0000314"/>
    <property type="project" value="TAIR"/>
</dbReference>
<dbReference type="GO" id="GO:0051555">
    <property type="term" value="P:flavonol biosynthetic process"/>
    <property type="evidence" value="ECO:0000314"/>
    <property type="project" value="TAIR"/>
</dbReference>
<dbReference type="GO" id="GO:0051707">
    <property type="term" value="P:response to other organism"/>
    <property type="evidence" value="ECO:0000270"/>
    <property type="project" value="TAIR"/>
</dbReference>
<dbReference type="CDD" id="cd03784">
    <property type="entry name" value="GT1_Gtf-like"/>
    <property type="match status" value="1"/>
</dbReference>
<dbReference type="FunFam" id="3.40.50.2000:FF:000047">
    <property type="entry name" value="Glycosyltransferase"/>
    <property type="match status" value="1"/>
</dbReference>
<dbReference type="FunFam" id="3.40.50.2000:FF:000071">
    <property type="entry name" value="Glycosyltransferase"/>
    <property type="match status" value="1"/>
</dbReference>
<dbReference type="Gene3D" id="3.40.50.2000">
    <property type="entry name" value="Glycogen Phosphorylase B"/>
    <property type="match status" value="2"/>
</dbReference>
<dbReference type="InterPro" id="IPR002213">
    <property type="entry name" value="UDP_glucos_trans"/>
</dbReference>
<dbReference type="InterPro" id="IPR035595">
    <property type="entry name" value="UDP_glycos_trans_CS"/>
</dbReference>
<dbReference type="PANTHER" id="PTHR48047">
    <property type="entry name" value="GLYCOSYLTRANSFERASE"/>
    <property type="match status" value="1"/>
</dbReference>
<dbReference type="PANTHER" id="PTHR48047:SF45">
    <property type="entry name" value="SCOPOLETIN GLUCOSYLTRANSFERASE-LIKE"/>
    <property type="match status" value="1"/>
</dbReference>
<dbReference type="Pfam" id="PF00201">
    <property type="entry name" value="UDPGT"/>
    <property type="match status" value="1"/>
</dbReference>
<dbReference type="SUPFAM" id="SSF53756">
    <property type="entry name" value="UDP-Glycosyltransferase/glycogen phosphorylase"/>
    <property type="match status" value="1"/>
</dbReference>
<dbReference type="PROSITE" id="PS00375">
    <property type="entry name" value="UDPGT"/>
    <property type="match status" value="1"/>
</dbReference>
<feature type="chain" id="PRO_0000403934" description="UDP-glucosyl transferase 73B2">
    <location>
        <begin position="1"/>
        <end position="483"/>
    </location>
</feature>
<feature type="active site" description="Proton acceptor" evidence="1">
    <location>
        <position position="22"/>
    </location>
</feature>
<feature type="active site" description="Charge relay" evidence="1">
    <location>
        <position position="133"/>
    </location>
</feature>
<feature type="binding site" evidence="2">
    <location>
        <position position="22"/>
    </location>
    <ligand>
        <name>an anthocyanidin</name>
        <dbReference type="ChEBI" id="CHEBI:143576"/>
    </ligand>
</feature>
<feature type="binding site" evidence="1">
    <location>
        <position position="355"/>
    </location>
    <ligand>
        <name>UDP-alpha-D-glucose</name>
        <dbReference type="ChEBI" id="CHEBI:58885"/>
    </ligand>
</feature>
<feature type="binding site" evidence="1">
    <location>
        <position position="357"/>
    </location>
    <ligand>
        <name>UDP-alpha-D-glucose</name>
        <dbReference type="ChEBI" id="CHEBI:58885"/>
    </ligand>
</feature>
<feature type="binding site" evidence="1">
    <location>
        <position position="372"/>
    </location>
    <ligand>
        <name>UDP-alpha-D-glucose</name>
        <dbReference type="ChEBI" id="CHEBI:58885"/>
    </ligand>
</feature>
<feature type="binding site" evidence="1">
    <location>
        <position position="375"/>
    </location>
    <ligand>
        <name>UDP-alpha-D-glucose</name>
        <dbReference type="ChEBI" id="CHEBI:58885"/>
    </ligand>
</feature>
<feature type="binding site" evidence="1">
    <location>
        <position position="376"/>
    </location>
    <ligand>
        <name>UDP-alpha-D-glucose</name>
        <dbReference type="ChEBI" id="CHEBI:58885"/>
    </ligand>
</feature>
<feature type="binding site" evidence="1">
    <location>
        <position position="377"/>
    </location>
    <ligand>
        <name>UDP-alpha-D-glucose</name>
        <dbReference type="ChEBI" id="CHEBI:58885"/>
    </ligand>
</feature>
<feature type="binding site" evidence="1">
    <location>
        <position position="380"/>
    </location>
    <ligand>
        <name>UDP-alpha-D-glucose</name>
        <dbReference type="ChEBI" id="CHEBI:58885"/>
    </ligand>
</feature>
<feature type="binding site" evidence="2">
    <location>
        <position position="395"/>
    </location>
    <ligand>
        <name>an anthocyanidin</name>
        <dbReference type="ChEBI" id="CHEBI:143576"/>
    </ligand>
</feature>
<feature type="binding site" evidence="1">
    <location>
        <position position="396"/>
    </location>
    <ligand>
        <name>UDP-alpha-D-glucose</name>
        <dbReference type="ChEBI" id="CHEBI:58885"/>
    </ligand>
</feature>
<feature type="binding site" evidence="1">
    <location>
        <position position="397"/>
    </location>
    <ligand>
        <name>UDP-alpha-D-glucose</name>
        <dbReference type="ChEBI" id="CHEBI:58885"/>
    </ligand>
</feature>
<name>U73B2_ARATH</name>
<gene>
    <name type="primary">UGT73B2</name>
    <name type="ordered locus">At4g34135</name>
    <name type="ORF">F28A23</name>
</gene>
<comment type="function">
    <text evidence="3 4">Catalyzes the glycosylation of flavonoids from UDP-glucose. Uses a wide range of flavonoid substrates including flavonols (quercetin, kaempferol, isorhamnetin, 3-OH 7,2',4'-MeO-flavone), flavones (luteolin, apigenin), flavanones (naringenin, hesperetin), flavanonols (taxifolin), isoflavones (genistein, daidzein), flavonol glycosides (quercitrin, isoquercitrin, rutin), and chalcones (isoliquiritigenin). Specific for the C-7 position, with a 20-fold lower activity for the C-3 position.</text>
</comment>
<comment type="catalytic activity">
    <reaction evidence="3">
        <text>a 7-O-hydroxy-flavonol + UDP-alpha-D-glucose = a flavonol 7-O-beta-D-glucoside + UDP + H(+)</text>
        <dbReference type="Rhea" id="RHEA:23164"/>
        <dbReference type="ChEBI" id="CHEBI:15378"/>
        <dbReference type="ChEBI" id="CHEBI:52144"/>
        <dbReference type="ChEBI" id="CHEBI:52267"/>
        <dbReference type="ChEBI" id="CHEBI:58223"/>
        <dbReference type="ChEBI" id="CHEBI:58885"/>
        <dbReference type="EC" id="2.4.1.237"/>
    </reaction>
</comment>
<comment type="pathway">
    <text>Secondary metabolite biosynthesis; flavonoid biosynthesis.</text>
</comment>
<comment type="alternative products">
    <event type="alternative splicing"/>
    <isoform>
        <id>Q94C57-1</id>
        <name>1</name>
        <sequence type="displayed"/>
    </isoform>
    <text>A number of isoforms are produced. According to EST sequences.</text>
</comment>
<comment type="tissue specificity">
    <text evidence="5">Expressed in roots and flowers.</text>
</comment>
<comment type="induction">
    <text evidence="5">Not induced by salicylic acid.</text>
</comment>
<comment type="similarity">
    <text evidence="6">Belongs to the UDP-glycosyltransferase family.</text>
</comment>
<sequence>MGSDHHHRKLHVMFFPFMAYGHMIPTLDMAKLFSSRGAKSTILTTSLNSKILQKPIDTFKNLNPGLEIDIQIFNFPCVELGLPEGCENVDFFTSNNNDDKNEMIVKFFFSTRFFKDQLEKLLGTTRPDCLIADMFFPWATEAAGKFNVPRLVFHGTGYFSLCAGYCIGVHKPQKRVASSSEPFVIPELPGNIVITEEQIIDGDGESDMGKFMTEVRESEVKSSGVVLNSFYELEHDYADFYKSCVQKRAWHIGPLSVYNRGFEEKAERGKKANIDEAECLKWLDSKKPNSVIYVSFGSVAFFKNEQLFEIAAGLEASGTSFIWVVRKTKDDREEWLPEGFEERVKGKGMIIRGWAPQVLILDHQATGGFVTHCGWNSLLEGVAAGLPMVTWPVGAEQFYNEKLVTQVLRTGVSVGASKHMKVMMGDFISREKVDKAVREVLAGEAAEERRRRAKKLAAMAKAAVEEGGSSFNDLNSFMEEFSS</sequence>
<evidence type="ECO:0000250" key="1">
    <source>
        <dbReference type="UniProtKB" id="A0A0A1HA03"/>
    </source>
</evidence>
<evidence type="ECO:0000250" key="2">
    <source>
        <dbReference type="UniProtKB" id="P51094"/>
    </source>
</evidence>
<evidence type="ECO:0000269" key="3">
    <source>
    </source>
</evidence>
<evidence type="ECO:0000269" key="4">
    <source>
    </source>
</evidence>
<evidence type="ECO:0000269" key="5">
    <source>
    </source>
</evidence>
<evidence type="ECO:0000305" key="6"/>
<reference key="1">
    <citation type="journal article" date="2004" name="Phytochemistry">
        <title>Bio-fermentation of modified flavonoids: an example of in vivo diversification of secondary metabolites.</title>
        <authorList>
            <person name="Willits M.G."/>
            <person name="Giovanni M."/>
            <person name="Prata R.T.N."/>
            <person name="Kramer C.M."/>
            <person name="De Luca V."/>
            <person name="Steffens J.C."/>
            <person name="Graser G."/>
        </authorList>
    </citation>
    <scope>NUCLEOTIDE SEQUENCE [MRNA]</scope>
    <scope>FUNCTION</scope>
    <scope>CATALYTIC ACTIVITY</scope>
    <source>
        <tissue>Leaf</tissue>
    </source>
</reference>
<reference key="2">
    <citation type="journal article" date="1999" name="Nature">
        <title>Sequence and analysis of chromosome 4 of the plant Arabidopsis thaliana.</title>
        <authorList>
            <person name="Mayer K.F.X."/>
            <person name="Schueller C."/>
            <person name="Wambutt R."/>
            <person name="Murphy G."/>
            <person name="Volckaert G."/>
            <person name="Pohl T."/>
            <person name="Duesterhoeft A."/>
            <person name="Stiekema W."/>
            <person name="Entian K.-D."/>
            <person name="Terryn N."/>
            <person name="Harris B."/>
            <person name="Ansorge W."/>
            <person name="Brandt P."/>
            <person name="Grivell L.A."/>
            <person name="Rieger M."/>
            <person name="Weichselgartner M."/>
            <person name="de Simone V."/>
            <person name="Obermaier B."/>
            <person name="Mache R."/>
            <person name="Mueller M."/>
            <person name="Kreis M."/>
            <person name="Delseny M."/>
            <person name="Puigdomenech P."/>
            <person name="Watson M."/>
            <person name="Schmidtheini T."/>
            <person name="Reichert B."/>
            <person name="Portetelle D."/>
            <person name="Perez-Alonso M."/>
            <person name="Boutry M."/>
            <person name="Bancroft I."/>
            <person name="Vos P."/>
            <person name="Hoheisel J."/>
            <person name="Zimmermann W."/>
            <person name="Wedler H."/>
            <person name="Ridley P."/>
            <person name="Langham S.-A."/>
            <person name="McCullagh B."/>
            <person name="Bilham L."/>
            <person name="Robben J."/>
            <person name="van der Schueren J."/>
            <person name="Grymonprez B."/>
            <person name="Chuang Y.-J."/>
            <person name="Vandenbussche F."/>
            <person name="Braeken M."/>
            <person name="Weltjens I."/>
            <person name="Voet M."/>
            <person name="Bastiaens I."/>
            <person name="Aert R."/>
            <person name="Defoor E."/>
            <person name="Weitzenegger T."/>
            <person name="Bothe G."/>
            <person name="Ramsperger U."/>
            <person name="Hilbert H."/>
            <person name="Braun M."/>
            <person name="Holzer E."/>
            <person name="Brandt A."/>
            <person name="Peters S."/>
            <person name="van Staveren M."/>
            <person name="Dirkse W."/>
            <person name="Mooijman P."/>
            <person name="Klein Lankhorst R."/>
            <person name="Rose M."/>
            <person name="Hauf J."/>
            <person name="Koetter P."/>
            <person name="Berneiser S."/>
            <person name="Hempel S."/>
            <person name="Feldpausch M."/>
            <person name="Lamberth S."/>
            <person name="Van den Daele H."/>
            <person name="De Keyser A."/>
            <person name="Buysshaert C."/>
            <person name="Gielen J."/>
            <person name="Villarroel R."/>
            <person name="De Clercq R."/>
            <person name="van Montagu M."/>
            <person name="Rogers J."/>
            <person name="Cronin A."/>
            <person name="Quail M.A."/>
            <person name="Bray-Allen S."/>
            <person name="Clark L."/>
            <person name="Doggett J."/>
            <person name="Hall S."/>
            <person name="Kay M."/>
            <person name="Lennard N."/>
            <person name="McLay K."/>
            <person name="Mayes R."/>
            <person name="Pettett A."/>
            <person name="Rajandream M.A."/>
            <person name="Lyne M."/>
            <person name="Benes V."/>
            <person name="Rechmann S."/>
            <person name="Borkova D."/>
            <person name="Bloecker H."/>
            <person name="Scharfe M."/>
            <person name="Grimm M."/>
            <person name="Loehnert T.-H."/>
            <person name="Dose S."/>
            <person name="de Haan M."/>
            <person name="Maarse A.C."/>
            <person name="Schaefer M."/>
            <person name="Mueller-Auer S."/>
            <person name="Gabel C."/>
            <person name="Fuchs M."/>
            <person name="Fartmann B."/>
            <person name="Granderath K."/>
            <person name="Dauner D."/>
            <person name="Herzl A."/>
            <person name="Neumann S."/>
            <person name="Argiriou A."/>
            <person name="Vitale D."/>
            <person name="Liguori R."/>
            <person name="Piravandi E."/>
            <person name="Massenet O."/>
            <person name="Quigley F."/>
            <person name="Clabauld G."/>
            <person name="Muendlein A."/>
            <person name="Felber R."/>
            <person name="Schnabl S."/>
            <person name="Hiller R."/>
            <person name="Schmidt W."/>
            <person name="Lecharny A."/>
            <person name="Aubourg S."/>
            <person name="Chefdor F."/>
            <person name="Cooke R."/>
            <person name="Berger C."/>
            <person name="Monfort A."/>
            <person name="Casacuberta E."/>
            <person name="Gibbons T."/>
            <person name="Weber N."/>
            <person name="Vandenbol M."/>
            <person name="Bargues M."/>
            <person name="Terol J."/>
            <person name="Torres A."/>
            <person name="Perez-Perez A."/>
            <person name="Purnelle B."/>
            <person name="Bent E."/>
            <person name="Johnson S."/>
            <person name="Tacon D."/>
            <person name="Jesse T."/>
            <person name="Heijnen L."/>
            <person name="Schwarz S."/>
            <person name="Scholler P."/>
            <person name="Heber S."/>
            <person name="Francs P."/>
            <person name="Bielke C."/>
            <person name="Frishman D."/>
            <person name="Haase D."/>
            <person name="Lemcke K."/>
            <person name="Mewes H.-W."/>
            <person name="Stocker S."/>
            <person name="Zaccaria P."/>
            <person name="Bevan M."/>
            <person name="Wilson R.K."/>
            <person name="de la Bastide M."/>
            <person name="Habermann K."/>
            <person name="Parnell L."/>
            <person name="Dedhia N."/>
            <person name="Gnoj L."/>
            <person name="Schutz K."/>
            <person name="Huang E."/>
            <person name="Spiegel L."/>
            <person name="Sekhon M."/>
            <person name="Murray J."/>
            <person name="Sheet P."/>
            <person name="Cordes M."/>
            <person name="Abu-Threideh J."/>
            <person name="Stoneking T."/>
            <person name="Kalicki J."/>
            <person name="Graves T."/>
            <person name="Harmon G."/>
            <person name="Edwards J."/>
            <person name="Latreille P."/>
            <person name="Courtney L."/>
            <person name="Cloud J."/>
            <person name="Abbott A."/>
            <person name="Scott K."/>
            <person name="Johnson D."/>
            <person name="Minx P."/>
            <person name="Bentley D."/>
            <person name="Fulton B."/>
            <person name="Miller N."/>
            <person name="Greco T."/>
            <person name="Kemp K."/>
            <person name="Kramer J."/>
            <person name="Fulton L."/>
            <person name="Mardis E."/>
            <person name="Dante M."/>
            <person name="Pepin K."/>
            <person name="Hillier L.W."/>
            <person name="Nelson J."/>
            <person name="Spieth J."/>
            <person name="Ryan E."/>
            <person name="Andrews S."/>
            <person name="Geisel C."/>
            <person name="Layman D."/>
            <person name="Du H."/>
            <person name="Ali J."/>
            <person name="Berghoff A."/>
            <person name="Jones K."/>
            <person name="Drone K."/>
            <person name="Cotton M."/>
            <person name="Joshu C."/>
            <person name="Antonoiu B."/>
            <person name="Zidanic M."/>
            <person name="Strong C."/>
            <person name="Sun H."/>
            <person name="Lamar B."/>
            <person name="Yordan C."/>
            <person name="Ma P."/>
            <person name="Zhong J."/>
            <person name="Preston R."/>
            <person name="Vil D."/>
            <person name="Shekher M."/>
            <person name="Matero A."/>
            <person name="Shah R."/>
            <person name="Swaby I.K."/>
            <person name="O'Shaughnessy A."/>
            <person name="Rodriguez M."/>
            <person name="Hoffman J."/>
            <person name="Till S."/>
            <person name="Granat S."/>
            <person name="Shohdy N."/>
            <person name="Hasegawa A."/>
            <person name="Hameed A."/>
            <person name="Lodhi M."/>
            <person name="Johnson A."/>
            <person name="Chen E."/>
            <person name="Marra M.A."/>
            <person name="Martienssen R."/>
            <person name="McCombie W.R."/>
        </authorList>
    </citation>
    <scope>NUCLEOTIDE SEQUENCE [LARGE SCALE GENOMIC DNA]</scope>
    <source>
        <strain>cv. Columbia</strain>
    </source>
</reference>
<reference key="3">
    <citation type="journal article" date="2017" name="Plant J.">
        <title>Araport11: a complete reannotation of the Arabidopsis thaliana reference genome.</title>
        <authorList>
            <person name="Cheng C.Y."/>
            <person name="Krishnakumar V."/>
            <person name="Chan A.P."/>
            <person name="Thibaud-Nissen F."/>
            <person name="Schobel S."/>
            <person name="Town C.D."/>
        </authorList>
    </citation>
    <scope>GENOME REANNOTATION</scope>
    <source>
        <strain>cv. Columbia</strain>
    </source>
</reference>
<reference key="4">
    <citation type="journal article" date="2003" name="Science">
        <title>Empirical analysis of transcriptional activity in the Arabidopsis genome.</title>
        <authorList>
            <person name="Yamada K."/>
            <person name="Lim J."/>
            <person name="Dale J.M."/>
            <person name="Chen H."/>
            <person name="Shinn P."/>
            <person name="Palm C.J."/>
            <person name="Southwick A.M."/>
            <person name="Wu H.C."/>
            <person name="Kim C.J."/>
            <person name="Nguyen M."/>
            <person name="Pham P.K."/>
            <person name="Cheuk R.F."/>
            <person name="Karlin-Newmann G."/>
            <person name="Liu S.X."/>
            <person name="Lam B."/>
            <person name="Sakano H."/>
            <person name="Wu T."/>
            <person name="Yu G."/>
            <person name="Miranda M."/>
            <person name="Quach H.L."/>
            <person name="Tripp M."/>
            <person name="Chang C.H."/>
            <person name="Lee J.M."/>
            <person name="Toriumi M.J."/>
            <person name="Chan M.M."/>
            <person name="Tang C.C."/>
            <person name="Onodera C.S."/>
            <person name="Deng J.M."/>
            <person name="Akiyama K."/>
            <person name="Ansari Y."/>
            <person name="Arakawa T."/>
            <person name="Banh J."/>
            <person name="Banno F."/>
            <person name="Bowser L."/>
            <person name="Brooks S.Y."/>
            <person name="Carninci P."/>
            <person name="Chao Q."/>
            <person name="Choy N."/>
            <person name="Enju A."/>
            <person name="Goldsmith A.D."/>
            <person name="Gurjal M."/>
            <person name="Hansen N.F."/>
            <person name="Hayashizaki Y."/>
            <person name="Johnson-Hopson C."/>
            <person name="Hsuan V.W."/>
            <person name="Iida K."/>
            <person name="Karnes M."/>
            <person name="Khan S."/>
            <person name="Koesema E."/>
            <person name="Ishida J."/>
            <person name="Jiang P.X."/>
            <person name="Jones T."/>
            <person name="Kawai J."/>
            <person name="Kamiya A."/>
            <person name="Meyers C."/>
            <person name="Nakajima M."/>
            <person name="Narusaka M."/>
            <person name="Seki M."/>
            <person name="Sakurai T."/>
            <person name="Satou M."/>
            <person name="Tamse R."/>
            <person name="Vaysberg M."/>
            <person name="Wallender E.K."/>
            <person name="Wong C."/>
            <person name="Yamamura Y."/>
            <person name="Yuan S."/>
            <person name="Shinozaki K."/>
            <person name="Davis R.W."/>
            <person name="Theologis A."/>
            <person name="Ecker J.R."/>
        </authorList>
    </citation>
    <scope>NUCLEOTIDE SEQUENCE [LARGE SCALE MRNA]</scope>
    <source>
        <strain>cv. Columbia</strain>
    </source>
</reference>
<reference key="5">
    <citation type="journal article" date="2001" name="J. Biol. Chem.">
        <title>Phylogenetic analysis of the UDP-glycosyltransferase multigene family of Arabidopsis thaliana.</title>
        <authorList>
            <person name="Li Y."/>
            <person name="Baldauf S."/>
            <person name="Lim E.K."/>
            <person name="Bowles D.J."/>
        </authorList>
    </citation>
    <scope>GENE FAMILY</scope>
</reference>
<reference key="6">
    <citation type="journal article" date="2004" name="Biotechnol. Bioeng.">
        <title>Arabidopsis glycosyltransferases as biocatalysts in fermentation for regioselective synthesis of diverse quercetin glucosides.</title>
        <authorList>
            <person name="Lim E.K."/>
            <person name="Ashford D.A."/>
            <person name="Hou B."/>
            <person name="Jackson R.G."/>
            <person name="Bowles D.J."/>
        </authorList>
    </citation>
    <scope>FUNCTION</scope>
</reference>
<reference key="7">
    <citation type="journal article" date="2005" name="Plant Physiol.">
        <title>Pathogen-responsive expression of glycosyltransferase genes UGT73B3 and UGT73B5 is necessary for resistance to Pseudomonas syringae pv tomato in Arabidopsis.</title>
        <authorList>
            <person name="Langlois-Meurinne M."/>
            <person name="Gachon C.M."/>
            <person name="Saindrenan P."/>
        </authorList>
    </citation>
    <scope>TISSUE SPECIFICITY</scope>
    <scope>INDUCTION BY SALICYLIC ACID</scope>
</reference>
<organism>
    <name type="scientific">Arabidopsis thaliana</name>
    <name type="common">Mouse-ear cress</name>
    <dbReference type="NCBI Taxonomy" id="3702"/>
    <lineage>
        <taxon>Eukaryota</taxon>
        <taxon>Viridiplantae</taxon>
        <taxon>Streptophyta</taxon>
        <taxon>Embryophyta</taxon>
        <taxon>Tracheophyta</taxon>
        <taxon>Spermatophyta</taxon>
        <taxon>Magnoliopsida</taxon>
        <taxon>eudicotyledons</taxon>
        <taxon>Gunneridae</taxon>
        <taxon>Pentapetalae</taxon>
        <taxon>rosids</taxon>
        <taxon>malvids</taxon>
        <taxon>Brassicales</taxon>
        <taxon>Brassicaceae</taxon>
        <taxon>Camelineae</taxon>
        <taxon>Arabidopsis</taxon>
    </lineage>
</organism>